<protein>
    <recommendedName>
        <fullName>Oxygen-regulated protein 1</fullName>
    </recommendedName>
    <alternativeName>
        <fullName>Retinitis pigmentosa RP1 protein homolog</fullName>
    </alternativeName>
</protein>
<sequence>MSDTPSTSFSMIHLTSEGQVPSPRHSNITHPVVAKRISFYKSGDPQFGGVRVVVNPRSFKTFDALLDSLSRKVPLPFGVRNISTPRGRHSITRLEELEDGKSYVCSHNKKVLPVDLDKARRRPRPWLSSRSISTHVQLCPATANMSTMAPGMLRAPRRLVVFRNGDPKNKHVVLLSRRITQSFEAFLQYLTQVMQCPVAKLYATDGRKVPSLQAVILSSGAVVAAGREPFKPGNYDIQKYLLPAKLPGISHRVHQKGKAKIEKRKMSTHMPSDLRPQTDSLISEKTYDCFSDFSVAPENYLALETHESQSLSTYPSEDDVEKSIVFNQDGTMTVVMKVRFKIKEEETVKWTTTVNRAGLSNNDEKNKKSSYPGKTDYGPSSLKLEACSLPEDIVDTTQQGSLTEEENTQMTEQQALSCSSASWENASMETDIQESQKQVKHFYRPPTPGPRRMRQKKSVIGTVTVVSETEVQEKQFSYSEERKGGEKSEYHMFTHSCSKMSSVSNKLVQIGSDNEMESALERTRESGSLKSQAINAGAIEITSQKVLKMCHNNALPSTAPENSVVEEGTDNSAVSGTATIKHFRTCGNANDSFSSITADSTPTSVNNYSNDRNISELPSVGSPVLTMRLVNEFAHCGLTEKPENRKKVLSSSASKKKKKKSQQRMITSNDKKKVIETKGPPNIAGKIPRAGTTAQERLLQESDCPDKGGRVCEQGLNISPMAIESNNFFPKSNPTFSKNFYKNKLNTFQNPKTQKLLAKRKSRPRKIVSTERLRKQEIGQEDKILLHSDSKLCESHLEKQSLFHVFNILEEDQKVLHRPPFQVEKVARNLKGMAKKSLVPKVNDLHIMLRNQKKQMGVKLKSGAEVSEQHVTTRADPLASLKKPDFPEGIPHHSGKSYVKRWLQNINSYPDFEHRKSGPLCQNRSDVVNYNRNGFLGNNLHTTSSKGNGFLMESNKSKTKNDNWSGNTNQETGKSLVAKDNGEELNKHHCESQNGSLYDSYLVSLHDNCTLSQTTINEPSTKSHLSIEKSRPEVKLVYQEMNFATKRQSIEVAIQVDTMGENVLKDYLPALLLRHLEAFVPNNQKHQNGISQIPGSLAEVVFPSVIDNSSTNLLLAWLLVLNLKRTMNSFCQSDAHKMTNRPSETAALLEVLKHVAITEEADDLKAAVANLMESTKTCSGSSGREQDMLPVNCTASSLHSVDECNENGSAQKTLLDEGYSVMGDCTSEMVSKSCNSSCEMHMVSKTNPPKQVDDQSDGLLTSNSCTVSQRSTGACFLTDGVYSHEACAQKEGVYEGACLSDETHIPIRDCHTIHSVHSKENKCTDDLESTEELKTVDKVPKGLSILADSMYKNDSNVSTFQNVNKLSSQRTLLSKTYLDSDKDYSPLEEFQNCPRKKIVNKKKSISSDKEESRTSEEPRSITNSMTSSERNAISELESFEELESQDTSIFNMNVRAEKKSTKETMQKQSEARMSSELINVSGRKIIEQERRNTAILETTARGQVTPPSLAFCYDSNKNTEKEISEGETKMRVKKMVDSMENESYSESSLNFKKHHRSPGTLDWSDYGSDSESGYPCKASSNSHNDDSGQEKEPTRGIVKRAIEKLYGKAEIIKPPFFHGSIHKSQVCPYNSVEVQCAKKTNFYESECQSLVSSEQVSRSSLIFQEFPQVDANGMGDSFGDSSIENVTKSSAHDRVFTEKENGKLIDNGKWLLRENHLWRVSSDNPGMYGNADTTSVDTLIDKNSIEVPYSHFGELAPGPTMAELSSSEIEEMTQPLEVKCNYFNFPHGSDSEPFGEDFPDAQNKTCPKEKIPNHHTEEKGNYPSERLCTSVTQAFVSAGNKVHPVCSDAIKTQPLPGSNITHGALQEGDSLDKLYALCGQHCPILTVIIQPVNEESRGFAYRKDSDIENSLDFQLWMKIYPFMPQSKKHVFRSDGRNVSVGEEFAGNVIGDLCDQLYFKSMIDLVDQRANSLGKEINLKKFQLYLKKSFSDPLSTSLLVVENRNSVSLSPSSWTDNFKSIDENNNFLNRLPNSSKNPNQVVRENTNFQFHLELFGQVYLLDICQVEKPLNIKTRSKLEMYYILEGEVLFIWEEEK</sequence>
<reference key="1">
    <citation type="journal article" date="1999" name="Nat. Genet.">
        <title>Mutations in a gene encoding a new oxygen-regulated photoreceptor protein cause dominant retinitis pigmentosa.</title>
        <authorList>
            <person name="Pierce E.A."/>
            <person name="Quinn T."/>
            <person name="Meehan T."/>
            <person name="McGee T.L."/>
            <person name="Berson E.L."/>
            <person name="Dryja T.P."/>
        </authorList>
    </citation>
    <scope>NUCLEOTIDE SEQUENCE [MRNA]</scope>
    <scope>SEQUENCE REVISION TO 67-76</scope>
    <source>
        <tissue>Retina</tissue>
    </source>
</reference>
<reference key="2">
    <citation type="journal article" date="2002" name="Proc. Natl. Acad. Sci. U.S.A.">
        <title>Progressive photoreceptor degeneration, outer segment dysplasia, and rhodopsin mislocalization in mice with targeted disruption of the retinitis pigmentosa-1 (Rp1) gene.</title>
        <authorList>
            <person name="Gao J."/>
            <person name="Cheon K."/>
            <person name="Nusinowitz S."/>
            <person name="Liu Q."/>
            <person name="Bei D."/>
            <person name="Atkins K."/>
            <person name="Azimi A."/>
            <person name="Daiger S.P."/>
            <person name="Farber D.B."/>
            <person name="Heckenlively J.R."/>
            <person name="Pierce E.A."/>
            <person name="Sullivan L.S."/>
            <person name="Zuo J."/>
        </authorList>
    </citation>
    <scope>NUCLEOTIDE SEQUENCE [GENOMIC DNA]</scope>
    <source>
        <strain>129/Sv</strain>
    </source>
</reference>
<reference key="3">
    <citation type="journal article" date="2004" name="Genome Res.">
        <title>The status, quality, and expansion of the NIH full-length cDNA project: the Mammalian Gene Collection (MGC).</title>
        <authorList>
            <consortium name="The MGC Project Team"/>
        </authorList>
    </citation>
    <scope>NUCLEOTIDE SEQUENCE [LARGE SCALE MRNA]</scope>
</reference>
<reference key="4">
    <citation type="submission" date="2009-01" db="UniProtKB">
        <authorList>
            <person name="Lubec G."/>
            <person name="Sunyer B."/>
            <person name="Chen W.-Q."/>
        </authorList>
    </citation>
    <scope>PROTEIN SEQUENCE OF 357-367</scope>
    <scope>IDENTIFICATION BY MASS SPECTROMETRY</scope>
    <source>
        <strain>OF1</strain>
        <tissue>Hippocampus</tissue>
    </source>
</reference>
<reference key="5">
    <citation type="journal article" date="2002" name="Invest. Ophthalmol. Vis. Sci.">
        <title>Identification and subcellular localization of the RP1 protein in human and mouse photoreceptors.</title>
        <authorList>
            <person name="Liu Q."/>
            <person name="Zhou J."/>
            <person name="Daiger S.P."/>
            <person name="Farber D.B."/>
            <person name="Heckenlively J.R."/>
            <person name="Smith J.E."/>
            <person name="Sullivan L.S."/>
            <person name="Zuo J."/>
            <person name="Milam A.H."/>
            <person name="Pierce E.A."/>
        </authorList>
    </citation>
    <scope>SUBCELLULAR LOCATION</scope>
</reference>
<reference key="6">
    <citation type="journal article" date="2003" name="Invest. Ophthalmol. Vis. Sci.">
        <title>RP1 is required for the correct stacking of outer segment discs.</title>
        <authorList>
            <person name="Liu Q."/>
            <person name="Lyubarsky A."/>
            <person name="Skalet J.H."/>
            <person name="Pugh E.N. Jr."/>
            <person name="Pierce E.A."/>
        </authorList>
    </citation>
    <scope>FUNCTION</scope>
    <scope>SUBCELLULAR LOCATION</scope>
</reference>
<reference key="7">
    <citation type="journal article" date="2004" name="J. Neurosci.">
        <title>The retinitis pigmentosa 1 protein is a photoreceptor microtubule-associated protein.</title>
        <authorList>
            <person name="Liu Q."/>
            <person name="Zuo J."/>
            <person name="Pierce E.A."/>
        </authorList>
    </citation>
    <scope>FUNCTION</scope>
    <scope>INTERACTION WITH MICROTUBULES</scope>
    <scope>SUBCELLULAR LOCATION</scope>
</reference>
<reference key="8">
    <citation type="journal article" date="2005" name="Hum. Mol. Genet.">
        <title>Distinct gene expression profiles and reduced JNK signaling in retinitis pigmentosa caused by RP1 mutations.</title>
        <authorList>
            <person name="Liu J."/>
            <person name="Huang Q."/>
            <person name="Higdon J."/>
            <person name="Liu W."/>
            <person name="Xie T."/>
            <person name="Yamashita T."/>
            <person name="Cheon K."/>
            <person name="Cheng C."/>
            <person name="Zuo J."/>
        </authorList>
    </citation>
    <scope>DISRUPTION PHENOTYPE</scope>
</reference>
<reference key="9">
    <citation type="journal article" date="2009" name="J. Neurosci.">
        <title>Essential and synergistic roles of RP1 and RP1L1 in rod photoreceptor axoneme and retinitis pigmentosa.</title>
        <authorList>
            <person name="Yamashita T."/>
            <person name="Liu J."/>
            <person name="Gao J."/>
            <person name="LeNoue S."/>
            <person name="Wang C."/>
            <person name="Kaminoh J."/>
            <person name="Bowne S.J."/>
            <person name="Sullivan L.S."/>
            <person name="Daiger S.P."/>
            <person name="Zhang K."/>
            <person name="Fitzgerald M.E."/>
            <person name="Kefalov V.J."/>
            <person name="Zuo J."/>
        </authorList>
    </citation>
    <scope>INTERACTION WITH RP1L1</scope>
    <scope>DISRUPTION PHENOTYPE</scope>
</reference>
<reference key="10">
    <citation type="journal article" date="2010" name="Proc. Natl. Acad. Sci. U.S.A.">
        <title>Negative regulation of ciliary length by ciliary male germ cell-associated kinase (Mak) is required for retinal photoreceptor survival.</title>
        <authorList>
            <person name="Omori Y."/>
            <person name="Chaya T."/>
            <person name="Katoh K."/>
            <person name="Kajimura N."/>
            <person name="Sato S."/>
            <person name="Muraoka K."/>
            <person name="Ueno S."/>
            <person name="Koyasu T."/>
            <person name="Kondo M."/>
            <person name="Furukawa T."/>
        </authorList>
    </citation>
    <scope>INTERACTION WITH MAK</scope>
</reference>
<accession>P56716</accession>
<accession>Q548Q8</accession>
<keyword id="KW-0966">Cell projection</keyword>
<keyword id="KW-0969">Cilium</keyword>
<keyword id="KW-0970">Cilium biogenesis/degradation</keyword>
<keyword id="KW-0963">Cytoplasm</keyword>
<keyword id="KW-0206">Cytoskeleton</keyword>
<keyword id="KW-0903">Direct protein sequencing</keyword>
<keyword id="KW-1185">Reference proteome</keyword>
<keyword id="KW-0677">Repeat</keyword>
<keyword id="KW-0716">Sensory transduction</keyword>
<keyword id="KW-0844">Vision</keyword>
<dbReference type="EMBL" id="AF155141">
    <property type="protein sequence ID" value="AAD42089.2"/>
    <property type="molecule type" value="mRNA"/>
</dbReference>
<dbReference type="EMBL" id="AF291754">
    <property type="protein sequence ID" value="AAM17919.1"/>
    <property type="molecule type" value="Genomic_DNA"/>
</dbReference>
<dbReference type="EMBL" id="BC120927">
    <property type="protein sequence ID" value="AAI20928.1"/>
    <property type="molecule type" value="mRNA"/>
</dbReference>
<dbReference type="EMBL" id="BC120928">
    <property type="protein sequence ID" value="AAI20929.1"/>
    <property type="molecule type" value="mRNA"/>
</dbReference>
<dbReference type="CCDS" id="CCDS14804.1"/>
<dbReference type="RefSeq" id="NP_035413.1">
    <property type="nucleotide sequence ID" value="NM_011283.3"/>
</dbReference>
<dbReference type="SMR" id="P56716"/>
<dbReference type="BioGRID" id="202959">
    <property type="interactions" value="6"/>
</dbReference>
<dbReference type="DIP" id="DIP-59493N"/>
<dbReference type="FunCoup" id="P56716">
    <property type="interactions" value="21"/>
</dbReference>
<dbReference type="IntAct" id="P56716">
    <property type="interactions" value="2"/>
</dbReference>
<dbReference type="STRING" id="10090.ENSMUSP00000027032"/>
<dbReference type="GlyGen" id="P56716">
    <property type="glycosylation" value="2 sites"/>
</dbReference>
<dbReference type="iPTMnet" id="P56716"/>
<dbReference type="PhosphoSitePlus" id="P56716"/>
<dbReference type="PaxDb" id="10090-ENSMUSP00000027032"/>
<dbReference type="PeptideAtlas" id="P56716"/>
<dbReference type="ProteomicsDB" id="301595"/>
<dbReference type="Antibodypedia" id="50968">
    <property type="antibodies" value="51 antibodies from 10 providers"/>
</dbReference>
<dbReference type="DNASU" id="19888"/>
<dbReference type="Ensembl" id="ENSMUST00000027032.6">
    <property type="protein sequence ID" value="ENSMUSP00000027032.5"/>
    <property type="gene ID" value="ENSMUSG00000025900.14"/>
</dbReference>
<dbReference type="GeneID" id="19888"/>
<dbReference type="KEGG" id="mmu:19888"/>
<dbReference type="UCSC" id="uc007aex.2">
    <property type="organism name" value="mouse"/>
</dbReference>
<dbReference type="AGR" id="MGI:1341105"/>
<dbReference type="CTD" id="6101"/>
<dbReference type="MGI" id="MGI:1341105">
    <property type="gene designation" value="Rp1"/>
</dbReference>
<dbReference type="VEuPathDB" id="HostDB:ENSMUSG00000025900"/>
<dbReference type="eggNOG" id="KOG1181">
    <property type="taxonomic scope" value="Eukaryota"/>
</dbReference>
<dbReference type="eggNOG" id="KOG3757">
    <property type="taxonomic scope" value="Eukaryota"/>
</dbReference>
<dbReference type="GeneTree" id="ENSGT00940000154242"/>
<dbReference type="HOGENOM" id="CLU_232270_0_0_1"/>
<dbReference type="InParanoid" id="P56716"/>
<dbReference type="OrthoDB" id="1738954at2759"/>
<dbReference type="PhylomeDB" id="P56716"/>
<dbReference type="TreeFam" id="TF318770"/>
<dbReference type="BioGRID-ORCS" id="19888">
    <property type="hits" value="1 hit in 79 CRISPR screens"/>
</dbReference>
<dbReference type="PRO" id="PR:P56716"/>
<dbReference type="Proteomes" id="UP000000589">
    <property type="component" value="Chromosome 1"/>
</dbReference>
<dbReference type="RNAct" id="P56716">
    <property type="molecule type" value="protein"/>
</dbReference>
<dbReference type="Bgee" id="ENSMUSG00000025900">
    <property type="expression patterns" value="Expressed in retinal neural layer and 21 other cell types or tissues"/>
</dbReference>
<dbReference type="ExpressionAtlas" id="P56716">
    <property type="expression patterns" value="baseline and differential"/>
</dbReference>
<dbReference type="GO" id="GO:0005930">
    <property type="term" value="C:axoneme"/>
    <property type="evidence" value="ECO:0000314"/>
    <property type="project" value="UniProtKB"/>
</dbReference>
<dbReference type="GO" id="GO:0097542">
    <property type="term" value="C:ciliary tip"/>
    <property type="evidence" value="ECO:0000314"/>
    <property type="project" value="MGI"/>
</dbReference>
<dbReference type="GO" id="GO:0005929">
    <property type="term" value="C:cilium"/>
    <property type="evidence" value="ECO:0000314"/>
    <property type="project" value="MGI"/>
</dbReference>
<dbReference type="GO" id="GO:0005875">
    <property type="term" value="C:microtubule associated complex"/>
    <property type="evidence" value="ECO:0000314"/>
    <property type="project" value="UniProtKB"/>
</dbReference>
<dbReference type="GO" id="GO:0097733">
    <property type="term" value="C:photoreceptor cell cilium"/>
    <property type="evidence" value="ECO:0000314"/>
    <property type="project" value="MGI"/>
</dbReference>
<dbReference type="GO" id="GO:0032391">
    <property type="term" value="C:photoreceptor connecting cilium"/>
    <property type="evidence" value="ECO:0000314"/>
    <property type="project" value="UniProtKB"/>
</dbReference>
<dbReference type="GO" id="GO:0001917">
    <property type="term" value="C:photoreceptor inner segment"/>
    <property type="evidence" value="ECO:0000314"/>
    <property type="project" value="UniProtKB"/>
</dbReference>
<dbReference type="GO" id="GO:0001750">
    <property type="term" value="C:photoreceptor outer segment"/>
    <property type="evidence" value="ECO:0000314"/>
    <property type="project" value="UniProtKB"/>
</dbReference>
<dbReference type="GO" id="GO:0008017">
    <property type="term" value="F:microtubule binding"/>
    <property type="evidence" value="ECO:0000314"/>
    <property type="project" value="UniProtKB"/>
</dbReference>
<dbReference type="GO" id="GO:0035082">
    <property type="term" value="P:axoneme assembly"/>
    <property type="evidence" value="ECO:0000314"/>
    <property type="project" value="UniProtKB"/>
</dbReference>
<dbReference type="GO" id="GO:0071482">
    <property type="term" value="P:cellular response to light stimulus"/>
    <property type="evidence" value="ECO:0000315"/>
    <property type="project" value="MGI"/>
</dbReference>
<dbReference type="GO" id="GO:0035556">
    <property type="term" value="P:intracellular signal transduction"/>
    <property type="evidence" value="ECO:0007669"/>
    <property type="project" value="InterPro"/>
</dbReference>
<dbReference type="GO" id="GO:0046785">
    <property type="term" value="P:microtubule polymerization"/>
    <property type="evidence" value="ECO:0000304"/>
    <property type="project" value="BHF-UCL"/>
</dbReference>
<dbReference type="GO" id="GO:0007026">
    <property type="term" value="P:negative regulation of microtubule depolymerization"/>
    <property type="evidence" value="ECO:0000304"/>
    <property type="project" value="BHF-UCL"/>
</dbReference>
<dbReference type="GO" id="GO:0042461">
    <property type="term" value="P:photoreceptor cell development"/>
    <property type="evidence" value="ECO:0000315"/>
    <property type="project" value="UniProtKB"/>
</dbReference>
<dbReference type="GO" id="GO:0045494">
    <property type="term" value="P:photoreceptor cell maintenance"/>
    <property type="evidence" value="ECO:0000315"/>
    <property type="project" value="UniProtKB"/>
</dbReference>
<dbReference type="GO" id="GO:0035845">
    <property type="term" value="P:photoreceptor cell outer segment organization"/>
    <property type="evidence" value="ECO:0000314"/>
    <property type="project" value="UniProtKB"/>
</dbReference>
<dbReference type="GO" id="GO:1902857">
    <property type="term" value="P:positive regulation of non-motile cilium assembly"/>
    <property type="evidence" value="ECO:0000314"/>
    <property type="project" value="MGI"/>
</dbReference>
<dbReference type="GO" id="GO:0060041">
    <property type="term" value="P:retina development in camera-type eye"/>
    <property type="evidence" value="ECO:0000315"/>
    <property type="project" value="MGI"/>
</dbReference>
<dbReference type="GO" id="GO:0060042">
    <property type="term" value="P:retina morphogenesis in camera-type eye"/>
    <property type="evidence" value="ECO:0000315"/>
    <property type="project" value="MGI"/>
</dbReference>
<dbReference type="GO" id="GO:0046549">
    <property type="term" value="P:retinal cone cell development"/>
    <property type="evidence" value="ECO:0000314"/>
    <property type="project" value="UniProtKB"/>
</dbReference>
<dbReference type="GO" id="GO:0046548">
    <property type="term" value="P:retinal rod cell development"/>
    <property type="evidence" value="ECO:0000314"/>
    <property type="project" value="UniProtKB"/>
</dbReference>
<dbReference type="GO" id="GO:0007601">
    <property type="term" value="P:visual perception"/>
    <property type="evidence" value="ECO:0007669"/>
    <property type="project" value="UniProtKB-KW"/>
</dbReference>
<dbReference type="CDD" id="cd17147">
    <property type="entry name" value="DCX2_RP1"/>
    <property type="match status" value="1"/>
</dbReference>
<dbReference type="FunFam" id="3.10.20.230:FF:000006">
    <property type="entry name" value="Oxygen-regulated protein 1"/>
    <property type="match status" value="1"/>
</dbReference>
<dbReference type="FunFam" id="3.10.20.230:FF:000007">
    <property type="entry name" value="Oxygen-regulated protein 1"/>
    <property type="match status" value="1"/>
</dbReference>
<dbReference type="Gene3D" id="3.10.20.230">
    <property type="entry name" value="Doublecortin domain"/>
    <property type="match status" value="2"/>
</dbReference>
<dbReference type="InterPro" id="IPR003533">
    <property type="entry name" value="Doublecortin_dom"/>
</dbReference>
<dbReference type="InterPro" id="IPR036572">
    <property type="entry name" value="Doublecortin_dom_sf"/>
</dbReference>
<dbReference type="PANTHER" id="PTHR23005:SF4">
    <property type="entry name" value="OXYGEN-REGULATED PROTEIN 1"/>
    <property type="match status" value="1"/>
</dbReference>
<dbReference type="PANTHER" id="PTHR23005">
    <property type="entry name" value="RETINITIS PIGMENTOSA 1 PROTEIN"/>
    <property type="match status" value="1"/>
</dbReference>
<dbReference type="Pfam" id="PF03607">
    <property type="entry name" value="DCX"/>
    <property type="match status" value="2"/>
</dbReference>
<dbReference type="SMART" id="SM00537">
    <property type="entry name" value="DCX"/>
    <property type="match status" value="2"/>
</dbReference>
<dbReference type="SUPFAM" id="SSF89837">
    <property type="entry name" value="Doublecortin (DC)"/>
    <property type="match status" value="2"/>
</dbReference>
<dbReference type="PROSITE" id="PS50309">
    <property type="entry name" value="DC"/>
    <property type="match status" value="2"/>
</dbReference>
<feature type="chain" id="PRO_0000097411" description="Oxygen-regulated protein 1">
    <location>
        <begin position="1"/>
        <end position="2095"/>
    </location>
</feature>
<feature type="domain" description="Doublecortin 1" evidence="2">
    <location>
        <begin position="35"/>
        <end position="117"/>
    </location>
</feature>
<feature type="domain" description="Doublecortin 2" evidence="2">
    <location>
        <begin position="157"/>
        <end position="236"/>
    </location>
</feature>
<feature type="region of interest" description="Disordered" evidence="3">
    <location>
        <begin position="358"/>
        <end position="379"/>
    </location>
</feature>
<feature type="region of interest" description="Disordered" evidence="3">
    <location>
        <begin position="643"/>
        <end position="688"/>
    </location>
</feature>
<feature type="region of interest" description="Disordered" evidence="3">
    <location>
        <begin position="863"/>
        <end position="887"/>
    </location>
</feature>
<feature type="region of interest" description="Disordered" evidence="3">
    <location>
        <begin position="1400"/>
        <end position="1430"/>
    </location>
</feature>
<feature type="region of interest" description="Disordered" evidence="3">
    <location>
        <begin position="1572"/>
        <end position="1595"/>
    </location>
</feature>
<feature type="compositionally biased region" description="Basic and acidic residues" evidence="3">
    <location>
        <begin position="1405"/>
        <end position="1419"/>
    </location>
</feature>
<feature type="compositionally biased region" description="Polar residues" evidence="3">
    <location>
        <begin position="1420"/>
        <end position="1430"/>
    </location>
</feature>
<feature type="compositionally biased region" description="Basic and acidic residues" evidence="3">
    <location>
        <begin position="1583"/>
        <end position="1595"/>
    </location>
</feature>
<proteinExistence type="evidence at protein level"/>
<organism>
    <name type="scientific">Mus musculus</name>
    <name type="common">Mouse</name>
    <dbReference type="NCBI Taxonomy" id="10090"/>
    <lineage>
        <taxon>Eukaryota</taxon>
        <taxon>Metazoa</taxon>
        <taxon>Chordata</taxon>
        <taxon>Craniata</taxon>
        <taxon>Vertebrata</taxon>
        <taxon>Euteleostomi</taxon>
        <taxon>Mammalia</taxon>
        <taxon>Eutheria</taxon>
        <taxon>Euarchontoglires</taxon>
        <taxon>Glires</taxon>
        <taxon>Rodentia</taxon>
        <taxon>Myomorpha</taxon>
        <taxon>Muroidea</taxon>
        <taxon>Muridae</taxon>
        <taxon>Murinae</taxon>
        <taxon>Mus</taxon>
        <taxon>Mus</taxon>
    </lineage>
</organism>
<gene>
    <name type="primary">Rp1</name>
    <name type="synonym">Orp1</name>
    <name type="synonym">Rp1h</name>
</gene>
<name>RP1_MOUSE</name>
<comment type="function">
    <text evidence="4 5">Microtubule-associated protein regulating the stability and length of the microtubule-based axoneme of photoreceptors. Required for the differentiation of photoreceptor cells, it plays a role in the organization of the outer segment of rod and cone photoreceptors ensuring the correct orientation and higher-order stacking of outer segment disks along the photoreceptor axoneme.</text>
</comment>
<comment type="subunit">
    <text evidence="5 7 8">Interacts (via the doublecortin domains) with microtubules. Interacts with RP1L1. Interacts with MAK.</text>
</comment>
<comment type="subcellular location">
    <subcellularLocation>
        <location>Cytoplasm</location>
        <location>Cytoskeleton</location>
        <location>Cilium axoneme</location>
    </subcellularLocation>
    <subcellularLocation>
        <location>Cell projection</location>
        <location>Cilium</location>
        <location>Photoreceptor outer segment</location>
    </subcellularLocation>
    <text>Specifically localized in the connecting cilia of rod and cone photoreceptors.</text>
</comment>
<comment type="tissue specificity">
    <text>Expressed in the cell bodies and inner segments of photoreceptors. Not found in liver, spleen, kidney, brain, thymus, muscle, heart, lung and testis.</text>
</comment>
<comment type="induction">
    <text>Gene expression is stimulated by retinal hypoxia and suppressed by relative retinal hyperoxia.</text>
</comment>
<comment type="domain">
    <text evidence="1">The doublecortin domains, which mediate interaction with microtubules, are required for regulation of microtubule polymerization and function in photoreceptor differentiation.</text>
</comment>
<comment type="disruption phenotype">
    <text evidence="6 7">As early as postnatal day 7, mice have already undergone significant molecular retinal changes. The molecular responses change dramatically during development and were distinct from responses to the disruption of the photoreceptor transcription factors Crx, Pde6b and Nrl. The JNK signaling cascades are specifically compromised in Rp1 defective retinas. Double heterozygotes of Rp1 and Rp1l1 exhibit abnormal outer segment morphology and reduced single rod photosensitivity and dark currents.</text>
</comment>
<evidence type="ECO:0000250" key="1"/>
<evidence type="ECO:0000255" key="2">
    <source>
        <dbReference type="PROSITE-ProRule" id="PRU00072"/>
    </source>
</evidence>
<evidence type="ECO:0000256" key="3">
    <source>
        <dbReference type="SAM" id="MobiDB-lite"/>
    </source>
</evidence>
<evidence type="ECO:0000269" key="4">
    <source>
    </source>
</evidence>
<evidence type="ECO:0000269" key="5">
    <source>
    </source>
</evidence>
<evidence type="ECO:0000269" key="6">
    <source>
    </source>
</evidence>
<evidence type="ECO:0000269" key="7">
    <source>
    </source>
</evidence>
<evidence type="ECO:0000269" key="8">
    <source>
    </source>
</evidence>